<comment type="function">
    <text evidence="1">Phosphatase that hydrolyzes non-canonical purine nucleotides such as XTP and ITP to their respective diphosphate derivatives. Probably excludes non-canonical purines from DNA/RNA precursor pool, thus preventing their incorporation into DNA/RNA and avoiding chromosomal lesions.</text>
</comment>
<comment type="catalytic activity">
    <reaction evidence="1">
        <text>XTP + H2O = XDP + phosphate + H(+)</text>
        <dbReference type="Rhea" id="RHEA:28406"/>
        <dbReference type="ChEBI" id="CHEBI:15377"/>
        <dbReference type="ChEBI" id="CHEBI:15378"/>
        <dbReference type="ChEBI" id="CHEBI:43474"/>
        <dbReference type="ChEBI" id="CHEBI:59884"/>
        <dbReference type="ChEBI" id="CHEBI:61314"/>
        <dbReference type="EC" id="3.6.1.73"/>
    </reaction>
</comment>
<comment type="catalytic activity">
    <reaction evidence="1">
        <text>ITP + H2O = IDP + phosphate + H(+)</text>
        <dbReference type="Rhea" id="RHEA:28330"/>
        <dbReference type="ChEBI" id="CHEBI:15377"/>
        <dbReference type="ChEBI" id="CHEBI:15378"/>
        <dbReference type="ChEBI" id="CHEBI:43474"/>
        <dbReference type="ChEBI" id="CHEBI:58280"/>
        <dbReference type="ChEBI" id="CHEBI:61402"/>
        <dbReference type="EC" id="3.6.1.73"/>
    </reaction>
</comment>
<comment type="cofactor">
    <cofactor evidence="1">
        <name>Mg(2+)</name>
        <dbReference type="ChEBI" id="CHEBI:18420"/>
    </cofactor>
    <cofactor evidence="1">
        <name>Mn(2+)</name>
        <dbReference type="ChEBI" id="CHEBI:29035"/>
    </cofactor>
    <text evidence="1">Binds 1 divalent metal cation per subunit; can use either Mg(2+) or Mn(2+).</text>
</comment>
<comment type="subunit">
    <text evidence="1">Homodimer.</text>
</comment>
<comment type="similarity">
    <text evidence="1">Belongs to the YjjX NTPase family.</text>
</comment>
<organism>
    <name type="scientific">Salmonella schwarzengrund (strain CVM19633)</name>
    <dbReference type="NCBI Taxonomy" id="439843"/>
    <lineage>
        <taxon>Bacteria</taxon>
        <taxon>Pseudomonadati</taxon>
        <taxon>Pseudomonadota</taxon>
        <taxon>Gammaproteobacteria</taxon>
        <taxon>Enterobacterales</taxon>
        <taxon>Enterobacteriaceae</taxon>
        <taxon>Salmonella</taxon>
    </lineage>
</organism>
<feature type="chain" id="PRO_1000130949" description="Inosine/xanthosine triphosphatase">
    <location>
        <begin position="1"/>
        <end position="171"/>
    </location>
</feature>
<feature type="binding site" evidence="1">
    <location>
        <begin position="8"/>
        <end position="13"/>
    </location>
    <ligand>
        <name>substrate</name>
    </ligand>
</feature>
<feature type="binding site" evidence="1">
    <location>
        <position position="38"/>
    </location>
    <ligand>
        <name>Mg(2+)</name>
        <dbReference type="ChEBI" id="CHEBI:18420"/>
    </ligand>
</feature>
<feature type="binding site" evidence="1">
    <location>
        <position position="68"/>
    </location>
    <ligand>
        <name>Mg(2+)</name>
        <dbReference type="ChEBI" id="CHEBI:18420"/>
    </ligand>
</feature>
<proteinExistence type="inferred from homology"/>
<name>NCPP_SALSV</name>
<dbReference type="EC" id="3.6.1.73" evidence="1"/>
<dbReference type="EMBL" id="CP001127">
    <property type="protein sequence ID" value="ACF90892.1"/>
    <property type="molecule type" value="Genomic_DNA"/>
</dbReference>
<dbReference type="RefSeq" id="WP_000554309.1">
    <property type="nucleotide sequence ID" value="NC_011094.1"/>
</dbReference>
<dbReference type="SMR" id="B4TU54"/>
<dbReference type="KEGG" id="sew:SeSA_A4835"/>
<dbReference type="HOGENOM" id="CLU_087417_1_0_6"/>
<dbReference type="Proteomes" id="UP000001865">
    <property type="component" value="Chromosome"/>
</dbReference>
<dbReference type="GO" id="GO:0103023">
    <property type="term" value="F:ITPase activity"/>
    <property type="evidence" value="ECO:0007669"/>
    <property type="project" value="UniProtKB-EC"/>
</dbReference>
<dbReference type="GO" id="GO:0046872">
    <property type="term" value="F:metal ion binding"/>
    <property type="evidence" value="ECO:0007669"/>
    <property type="project" value="UniProtKB-KW"/>
</dbReference>
<dbReference type="GO" id="GO:0000166">
    <property type="term" value="F:nucleotide binding"/>
    <property type="evidence" value="ECO:0007669"/>
    <property type="project" value="UniProtKB-KW"/>
</dbReference>
<dbReference type="GO" id="GO:0017111">
    <property type="term" value="F:ribonucleoside triphosphate phosphatase activity"/>
    <property type="evidence" value="ECO:0000250"/>
    <property type="project" value="UniProtKB"/>
</dbReference>
<dbReference type="GO" id="GO:0009117">
    <property type="term" value="P:nucleotide metabolic process"/>
    <property type="evidence" value="ECO:0007669"/>
    <property type="project" value="UniProtKB-KW"/>
</dbReference>
<dbReference type="GO" id="GO:0006772">
    <property type="term" value="P:thiamine metabolic process"/>
    <property type="evidence" value="ECO:0007669"/>
    <property type="project" value="TreeGrafter"/>
</dbReference>
<dbReference type="FunFam" id="3.90.950.10:FF:000002">
    <property type="entry name" value="Inosine/xanthosine triphosphatase"/>
    <property type="match status" value="1"/>
</dbReference>
<dbReference type="Gene3D" id="3.90.950.10">
    <property type="match status" value="1"/>
</dbReference>
<dbReference type="HAMAP" id="MF_00648">
    <property type="entry name" value="Non_canon_purine_NTPase_YjjX"/>
    <property type="match status" value="1"/>
</dbReference>
<dbReference type="InterPro" id="IPR029001">
    <property type="entry name" value="ITPase-like_fam"/>
</dbReference>
<dbReference type="InterPro" id="IPR002786">
    <property type="entry name" value="Non_canon_purine_NTPase"/>
</dbReference>
<dbReference type="InterPro" id="IPR026533">
    <property type="entry name" value="NTPase/PRRC1"/>
</dbReference>
<dbReference type="InterPro" id="IPR050299">
    <property type="entry name" value="YjjX_NTPase"/>
</dbReference>
<dbReference type="NCBIfam" id="TIGR00258">
    <property type="entry name" value="inosine/xanthosine triphosphatase"/>
    <property type="match status" value="1"/>
</dbReference>
<dbReference type="NCBIfam" id="NF003459">
    <property type="entry name" value="PRK05074.1"/>
    <property type="match status" value="1"/>
</dbReference>
<dbReference type="PANTHER" id="PTHR34699">
    <property type="match status" value="1"/>
</dbReference>
<dbReference type="PANTHER" id="PTHR34699:SF2">
    <property type="entry name" value="NON-CANONICAL PURINE NTP PHOSPHATASE_PRRC1 DOMAIN-CONTAINING PROTEIN"/>
    <property type="match status" value="1"/>
</dbReference>
<dbReference type="Pfam" id="PF01931">
    <property type="entry name" value="NTPase_I-T"/>
    <property type="match status" value="1"/>
</dbReference>
<dbReference type="SUPFAM" id="SSF52972">
    <property type="entry name" value="ITPase-like"/>
    <property type="match status" value="1"/>
</dbReference>
<accession>B4TU54</accession>
<evidence type="ECO:0000255" key="1">
    <source>
        <dbReference type="HAMAP-Rule" id="MF_00648"/>
    </source>
</evidence>
<keyword id="KW-0378">Hydrolase</keyword>
<keyword id="KW-0460">Magnesium</keyword>
<keyword id="KW-0464">Manganese</keyword>
<keyword id="KW-0479">Metal-binding</keyword>
<keyword id="KW-0546">Nucleotide metabolism</keyword>
<keyword id="KW-0547">Nucleotide-binding</keyword>
<protein>
    <recommendedName>
        <fullName evidence="1">Inosine/xanthosine triphosphatase</fullName>
        <shortName evidence="1">ITPase/XTPase</shortName>
        <ecNumber evidence="1">3.6.1.73</ecNumber>
    </recommendedName>
    <alternativeName>
        <fullName evidence="1">Non-canonical purine NTP phosphatase</fullName>
    </alternativeName>
    <alternativeName>
        <fullName evidence="1">Non-standard purine NTP phosphatase</fullName>
    </alternativeName>
    <alternativeName>
        <fullName evidence="1">Nucleoside-triphosphate phosphatase</fullName>
        <shortName evidence="1">NTPase</shortName>
    </alternativeName>
</protein>
<reference key="1">
    <citation type="journal article" date="2011" name="J. Bacteriol.">
        <title>Comparative genomics of 28 Salmonella enterica isolates: evidence for CRISPR-mediated adaptive sublineage evolution.</title>
        <authorList>
            <person name="Fricke W.F."/>
            <person name="Mammel M.K."/>
            <person name="McDermott P.F."/>
            <person name="Tartera C."/>
            <person name="White D.G."/>
            <person name="Leclerc J.E."/>
            <person name="Ravel J."/>
            <person name="Cebula T.A."/>
        </authorList>
    </citation>
    <scope>NUCLEOTIDE SEQUENCE [LARGE SCALE GENOMIC DNA]</scope>
    <source>
        <strain>CVM19633</strain>
    </source>
</reference>
<gene>
    <name type="primary">yjjX</name>
    <name type="ordered locus">SeSA_A4835</name>
</gene>
<sequence length="171" mass="18499">MHQVISATTNPAKIQAILQAFEEIFGEGSCHITPVAVESGVPEQPFGSEETRAGARNRVDNARRLHPQADFWVAIEAGIDDDATFSWVVIDNGVQRGEARSATLPLPAVILDRVHQGKALGPVMSQYTGIDEIGRKEGAIGVFTAGKLTRSSVYYQAVILALSPFHNAVYR</sequence>